<sequence length="172" mass="19226">MVINFEELHPNERAELERNIFFSTLEQLKGWARSNSLWPMTFGLACCAIEMMGVGSSHYDLDRFGSFFRTSPRQSDVMIVSGTVTKKMAPIVRRLYDQMPEPKWVIAMGSCATAGGPYVNSYAVVKGVDQIVPVDVYIPGCPPNPAALIYGINKLKEKIRYEAKTGKQVTNK</sequence>
<organism>
    <name type="scientific">Bacillus cereus (strain ATCC 10987 / NRS 248)</name>
    <dbReference type="NCBI Taxonomy" id="222523"/>
    <lineage>
        <taxon>Bacteria</taxon>
        <taxon>Bacillati</taxon>
        <taxon>Bacillota</taxon>
        <taxon>Bacilli</taxon>
        <taxon>Bacillales</taxon>
        <taxon>Bacillaceae</taxon>
        <taxon>Bacillus</taxon>
        <taxon>Bacillus cereus group</taxon>
    </lineage>
</organism>
<gene>
    <name evidence="1" type="primary">nuoB</name>
    <name type="ordered locus">BCE_5424</name>
</gene>
<protein>
    <recommendedName>
        <fullName evidence="1">NADH-quinone oxidoreductase subunit B</fullName>
        <ecNumber evidence="1">7.1.1.-</ecNumber>
    </recommendedName>
    <alternativeName>
        <fullName evidence="1">NADH dehydrogenase I subunit B</fullName>
    </alternativeName>
    <alternativeName>
        <fullName evidence="1">NDH-1 subunit B</fullName>
    </alternativeName>
</protein>
<keyword id="KW-0004">4Fe-4S</keyword>
<keyword id="KW-1003">Cell membrane</keyword>
<keyword id="KW-0408">Iron</keyword>
<keyword id="KW-0411">Iron-sulfur</keyword>
<keyword id="KW-0472">Membrane</keyword>
<keyword id="KW-0479">Metal-binding</keyword>
<keyword id="KW-0520">NAD</keyword>
<keyword id="KW-0874">Quinone</keyword>
<keyword id="KW-1278">Translocase</keyword>
<keyword id="KW-0813">Transport</keyword>
<proteinExistence type="inferred from homology"/>
<comment type="function">
    <text evidence="1">NDH-1 shuttles electrons from NADH, via FMN and iron-sulfur (Fe-S) centers, to quinones in the respiratory chain. The immediate electron acceptor for the enzyme in this species is believed to be a menaquinone. Couples the redox reaction to proton translocation (for every two electrons transferred, four hydrogen ions are translocated across the cytoplasmic membrane), and thus conserves the redox energy in a proton gradient.</text>
</comment>
<comment type="catalytic activity">
    <reaction evidence="1">
        <text>a quinone + NADH + 5 H(+)(in) = a quinol + NAD(+) + 4 H(+)(out)</text>
        <dbReference type="Rhea" id="RHEA:57888"/>
        <dbReference type="ChEBI" id="CHEBI:15378"/>
        <dbReference type="ChEBI" id="CHEBI:24646"/>
        <dbReference type="ChEBI" id="CHEBI:57540"/>
        <dbReference type="ChEBI" id="CHEBI:57945"/>
        <dbReference type="ChEBI" id="CHEBI:132124"/>
    </reaction>
</comment>
<comment type="cofactor">
    <cofactor evidence="1">
        <name>[4Fe-4S] cluster</name>
        <dbReference type="ChEBI" id="CHEBI:49883"/>
    </cofactor>
    <text evidence="1">Binds 1 [4Fe-4S] cluster.</text>
</comment>
<comment type="subunit">
    <text evidence="1">NDH-1 is composed of 14 different subunits. Subunits NuoB, C, D, E, F, and G constitute the peripheral sector of the complex.</text>
</comment>
<comment type="subcellular location">
    <subcellularLocation>
        <location evidence="1">Cell membrane</location>
        <topology evidence="1">Peripheral membrane protein</topology>
        <orientation evidence="1">Cytoplasmic side</orientation>
    </subcellularLocation>
</comment>
<comment type="similarity">
    <text evidence="1">Belongs to the complex I 20 kDa subunit family.</text>
</comment>
<accession>Q72XF4</accession>
<reference key="1">
    <citation type="journal article" date="2004" name="Nucleic Acids Res.">
        <title>The genome sequence of Bacillus cereus ATCC 10987 reveals metabolic adaptations and a large plasmid related to Bacillus anthracis pXO1.</title>
        <authorList>
            <person name="Rasko D.A."/>
            <person name="Ravel J."/>
            <person name="Oekstad O.A."/>
            <person name="Helgason E."/>
            <person name="Cer R.Z."/>
            <person name="Jiang L."/>
            <person name="Shores K.A."/>
            <person name="Fouts D.E."/>
            <person name="Tourasse N.J."/>
            <person name="Angiuoli S.V."/>
            <person name="Kolonay J.F."/>
            <person name="Nelson W.C."/>
            <person name="Kolstoe A.-B."/>
            <person name="Fraser C.M."/>
            <person name="Read T.D."/>
        </authorList>
    </citation>
    <scope>NUCLEOTIDE SEQUENCE [LARGE SCALE GENOMIC DNA]</scope>
    <source>
        <strain>ATCC 10987 / NRS 248</strain>
    </source>
</reference>
<dbReference type="EC" id="7.1.1.-" evidence="1"/>
<dbReference type="EMBL" id="AE017194">
    <property type="protein sequence ID" value="AAS44324.1"/>
    <property type="molecule type" value="Genomic_DNA"/>
</dbReference>
<dbReference type="SMR" id="Q72XF4"/>
<dbReference type="KEGG" id="bca:BCE_5424"/>
<dbReference type="HOGENOM" id="CLU_055737_7_3_9"/>
<dbReference type="Proteomes" id="UP000002527">
    <property type="component" value="Chromosome"/>
</dbReference>
<dbReference type="GO" id="GO:0005886">
    <property type="term" value="C:plasma membrane"/>
    <property type="evidence" value="ECO:0007669"/>
    <property type="project" value="UniProtKB-SubCell"/>
</dbReference>
<dbReference type="GO" id="GO:0045271">
    <property type="term" value="C:respiratory chain complex I"/>
    <property type="evidence" value="ECO:0007669"/>
    <property type="project" value="TreeGrafter"/>
</dbReference>
<dbReference type="GO" id="GO:0051539">
    <property type="term" value="F:4 iron, 4 sulfur cluster binding"/>
    <property type="evidence" value="ECO:0007669"/>
    <property type="project" value="UniProtKB-KW"/>
</dbReference>
<dbReference type="GO" id="GO:0005506">
    <property type="term" value="F:iron ion binding"/>
    <property type="evidence" value="ECO:0007669"/>
    <property type="project" value="UniProtKB-UniRule"/>
</dbReference>
<dbReference type="GO" id="GO:0008137">
    <property type="term" value="F:NADH dehydrogenase (ubiquinone) activity"/>
    <property type="evidence" value="ECO:0007669"/>
    <property type="project" value="InterPro"/>
</dbReference>
<dbReference type="GO" id="GO:0050136">
    <property type="term" value="F:NADH:ubiquinone reductase (non-electrogenic) activity"/>
    <property type="evidence" value="ECO:0007669"/>
    <property type="project" value="UniProtKB-UniRule"/>
</dbReference>
<dbReference type="GO" id="GO:0048038">
    <property type="term" value="F:quinone binding"/>
    <property type="evidence" value="ECO:0007669"/>
    <property type="project" value="UniProtKB-KW"/>
</dbReference>
<dbReference type="GO" id="GO:0009060">
    <property type="term" value="P:aerobic respiration"/>
    <property type="evidence" value="ECO:0007669"/>
    <property type="project" value="TreeGrafter"/>
</dbReference>
<dbReference type="GO" id="GO:0015990">
    <property type="term" value="P:electron transport coupled proton transport"/>
    <property type="evidence" value="ECO:0007669"/>
    <property type="project" value="TreeGrafter"/>
</dbReference>
<dbReference type="FunFam" id="3.40.50.12280:FF:000002">
    <property type="entry name" value="NADH-quinone oxidoreductase subunit B"/>
    <property type="match status" value="1"/>
</dbReference>
<dbReference type="Gene3D" id="3.40.50.12280">
    <property type="match status" value="1"/>
</dbReference>
<dbReference type="HAMAP" id="MF_01356">
    <property type="entry name" value="NDH1_NuoB"/>
    <property type="match status" value="1"/>
</dbReference>
<dbReference type="InterPro" id="IPR006137">
    <property type="entry name" value="NADH_UbQ_OxRdtase-like_20kDa"/>
</dbReference>
<dbReference type="InterPro" id="IPR006138">
    <property type="entry name" value="NADH_UQ_OxRdtase_20Kd_su"/>
</dbReference>
<dbReference type="NCBIfam" id="TIGR01957">
    <property type="entry name" value="nuoB_fam"/>
    <property type="match status" value="1"/>
</dbReference>
<dbReference type="NCBIfam" id="NF005012">
    <property type="entry name" value="PRK06411.1"/>
    <property type="match status" value="1"/>
</dbReference>
<dbReference type="PANTHER" id="PTHR11995">
    <property type="entry name" value="NADH DEHYDROGENASE"/>
    <property type="match status" value="1"/>
</dbReference>
<dbReference type="PANTHER" id="PTHR11995:SF14">
    <property type="entry name" value="NADH DEHYDROGENASE [UBIQUINONE] IRON-SULFUR PROTEIN 7, MITOCHONDRIAL"/>
    <property type="match status" value="1"/>
</dbReference>
<dbReference type="Pfam" id="PF01058">
    <property type="entry name" value="Oxidored_q6"/>
    <property type="match status" value="1"/>
</dbReference>
<dbReference type="SUPFAM" id="SSF56770">
    <property type="entry name" value="HydA/Nqo6-like"/>
    <property type="match status" value="1"/>
</dbReference>
<evidence type="ECO:0000255" key="1">
    <source>
        <dbReference type="HAMAP-Rule" id="MF_01356"/>
    </source>
</evidence>
<name>NUOB_BACC1</name>
<feature type="chain" id="PRO_0000376130" description="NADH-quinone oxidoreductase subunit B">
    <location>
        <begin position="1"/>
        <end position="172"/>
    </location>
</feature>
<feature type="binding site" evidence="1">
    <location>
        <position position="46"/>
    </location>
    <ligand>
        <name>[4Fe-4S] cluster</name>
        <dbReference type="ChEBI" id="CHEBI:49883"/>
    </ligand>
</feature>
<feature type="binding site" evidence="1">
    <location>
        <position position="47"/>
    </location>
    <ligand>
        <name>[4Fe-4S] cluster</name>
        <dbReference type="ChEBI" id="CHEBI:49883"/>
    </ligand>
</feature>
<feature type="binding site" evidence="1">
    <location>
        <position position="111"/>
    </location>
    <ligand>
        <name>[4Fe-4S] cluster</name>
        <dbReference type="ChEBI" id="CHEBI:49883"/>
    </ligand>
</feature>
<feature type="binding site" evidence="1">
    <location>
        <position position="141"/>
    </location>
    <ligand>
        <name>[4Fe-4S] cluster</name>
        <dbReference type="ChEBI" id="CHEBI:49883"/>
    </ligand>
</feature>